<protein>
    <recommendedName>
        <fullName evidence="1">Malonyl-[acyl-carrier protein] O-methyltransferase</fullName>
        <shortName evidence="1">Malonyl-ACP O-methyltransferase</shortName>
        <ecNumber evidence="1">2.1.1.197</ecNumber>
    </recommendedName>
    <alternativeName>
        <fullName evidence="1">Biotin synthesis protein BioC</fullName>
    </alternativeName>
</protein>
<keyword id="KW-0093">Biotin biosynthesis</keyword>
<keyword id="KW-0489">Methyltransferase</keyword>
<keyword id="KW-1185">Reference proteome</keyword>
<keyword id="KW-0949">S-adenosyl-L-methionine</keyword>
<keyword id="KW-0808">Transferase</keyword>
<gene>
    <name evidence="1" type="primary">bioC</name>
    <name type="ordered locus">Plut_2067</name>
</gene>
<organism>
    <name type="scientific">Chlorobium luteolum (strain DSM 273 / BCRC 81028 / 2530)</name>
    <name type="common">Pelodictyon luteolum</name>
    <dbReference type="NCBI Taxonomy" id="319225"/>
    <lineage>
        <taxon>Bacteria</taxon>
        <taxon>Pseudomonadati</taxon>
        <taxon>Chlorobiota</taxon>
        <taxon>Chlorobiia</taxon>
        <taxon>Chlorobiales</taxon>
        <taxon>Chlorobiaceae</taxon>
        <taxon>Chlorobium/Pelodictyon group</taxon>
        <taxon>Pelodictyon</taxon>
    </lineage>
</organism>
<proteinExistence type="inferred from homology"/>
<evidence type="ECO:0000255" key="1">
    <source>
        <dbReference type="HAMAP-Rule" id="MF_00835"/>
    </source>
</evidence>
<comment type="function">
    <text evidence="1">Converts the free carboxyl group of a malonyl-thioester to its methyl ester by transfer of a methyl group from S-adenosyl-L-methionine (SAM). It allows to synthesize pimeloyl-ACP via the fatty acid synthetic pathway.</text>
</comment>
<comment type="catalytic activity">
    <reaction evidence="1">
        <text>malonyl-[ACP] + S-adenosyl-L-methionine = malonyl-[ACP] methyl ester + S-adenosyl-L-homocysteine</text>
        <dbReference type="Rhea" id="RHEA:17105"/>
        <dbReference type="Rhea" id="RHEA-COMP:9623"/>
        <dbReference type="Rhea" id="RHEA-COMP:9954"/>
        <dbReference type="ChEBI" id="CHEBI:57856"/>
        <dbReference type="ChEBI" id="CHEBI:59789"/>
        <dbReference type="ChEBI" id="CHEBI:78449"/>
        <dbReference type="ChEBI" id="CHEBI:78845"/>
        <dbReference type="EC" id="2.1.1.197"/>
    </reaction>
</comment>
<comment type="pathway">
    <text evidence="1">Cofactor biosynthesis; biotin biosynthesis.</text>
</comment>
<comment type="similarity">
    <text evidence="1">Belongs to the methyltransferase superfamily.</text>
</comment>
<sequence length="263" mass="29527">MAGLTDKALVRERFRRTLGSYAGEAAVQRAMAQELVSMAARHASGIHFERVLEVGSGSGMLTELMLEAFSIERYTANDLVEESRECLQGIMDRHPEVVFNFLGGDVESLPFLPERRDLVVSNATLQWLDDLETFLGRIADSMAPGGLFLFTSFSSSNMQEIAAILGTALTYRSIAETGELCERYFEVLELREAEITLTFSSPEAVLRHISRTGVNALARKPWTKGRQKEFSDRYRSMFSQAEGVRLTYNPVYCCLRKRQEGSL</sequence>
<dbReference type="EC" id="2.1.1.197" evidence="1"/>
<dbReference type="EMBL" id="CP000096">
    <property type="protein sequence ID" value="ABB24909.1"/>
    <property type="molecule type" value="Genomic_DNA"/>
</dbReference>
<dbReference type="RefSeq" id="WP_011358779.1">
    <property type="nucleotide sequence ID" value="NC_007512.1"/>
</dbReference>
<dbReference type="SMR" id="Q3B172"/>
<dbReference type="STRING" id="319225.Plut_2067"/>
<dbReference type="KEGG" id="plt:Plut_2067"/>
<dbReference type="eggNOG" id="COG4106">
    <property type="taxonomic scope" value="Bacteria"/>
</dbReference>
<dbReference type="HOGENOM" id="CLU_046586_1_0_10"/>
<dbReference type="OrthoDB" id="9760689at2"/>
<dbReference type="UniPathway" id="UPA00078"/>
<dbReference type="Proteomes" id="UP000002709">
    <property type="component" value="Chromosome"/>
</dbReference>
<dbReference type="GO" id="GO:0010340">
    <property type="term" value="F:carboxyl-O-methyltransferase activity"/>
    <property type="evidence" value="ECO:0007669"/>
    <property type="project" value="UniProtKB-UniRule"/>
</dbReference>
<dbReference type="GO" id="GO:0102130">
    <property type="term" value="F:malonyl-CoA methyltransferase activity"/>
    <property type="evidence" value="ECO:0007669"/>
    <property type="project" value="UniProtKB-EC"/>
</dbReference>
<dbReference type="GO" id="GO:0008757">
    <property type="term" value="F:S-adenosylmethionine-dependent methyltransferase activity"/>
    <property type="evidence" value="ECO:0007669"/>
    <property type="project" value="InterPro"/>
</dbReference>
<dbReference type="GO" id="GO:0009102">
    <property type="term" value="P:biotin biosynthetic process"/>
    <property type="evidence" value="ECO:0007669"/>
    <property type="project" value="UniProtKB-UniRule"/>
</dbReference>
<dbReference type="GO" id="GO:0032259">
    <property type="term" value="P:methylation"/>
    <property type="evidence" value="ECO:0007669"/>
    <property type="project" value="UniProtKB-KW"/>
</dbReference>
<dbReference type="CDD" id="cd02440">
    <property type="entry name" value="AdoMet_MTases"/>
    <property type="match status" value="1"/>
</dbReference>
<dbReference type="Gene3D" id="3.40.50.150">
    <property type="entry name" value="Vaccinia Virus protein VP39"/>
    <property type="match status" value="1"/>
</dbReference>
<dbReference type="HAMAP" id="MF_00835">
    <property type="entry name" value="BioC"/>
    <property type="match status" value="1"/>
</dbReference>
<dbReference type="InterPro" id="IPR011814">
    <property type="entry name" value="BioC"/>
</dbReference>
<dbReference type="InterPro" id="IPR050602">
    <property type="entry name" value="Malonyl-ACP_OMT"/>
</dbReference>
<dbReference type="InterPro" id="IPR013216">
    <property type="entry name" value="Methyltransf_11"/>
</dbReference>
<dbReference type="InterPro" id="IPR029063">
    <property type="entry name" value="SAM-dependent_MTases_sf"/>
</dbReference>
<dbReference type="NCBIfam" id="TIGR02072">
    <property type="entry name" value="BioC"/>
    <property type="match status" value="1"/>
</dbReference>
<dbReference type="PANTHER" id="PTHR13090">
    <property type="entry name" value="ARGININE-HYDROXYLASE NDUFAF5, MITOCHONDRIAL"/>
    <property type="match status" value="1"/>
</dbReference>
<dbReference type="PANTHER" id="PTHR13090:SF1">
    <property type="entry name" value="ARGININE-HYDROXYLASE NDUFAF5, MITOCHONDRIAL"/>
    <property type="match status" value="1"/>
</dbReference>
<dbReference type="Pfam" id="PF08241">
    <property type="entry name" value="Methyltransf_11"/>
    <property type="match status" value="1"/>
</dbReference>
<dbReference type="SUPFAM" id="SSF53335">
    <property type="entry name" value="S-adenosyl-L-methionine-dependent methyltransferases"/>
    <property type="match status" value="1"/>
</dbReference>
<reference key="1">
    <citation type="submission" date="2005-08" db="EMBL/GenBank/DDBJ databases">
        <title>Complete sequence of Pelodictyon luteolum DSM 273.</title>
        <authorList>
            <consortium name="US DOE Joint Genome Institute"/>
            <person name="Copeland A."/>
            <person name="Lucas S."/>
            <person name="Lapidus A."/>
            <person name="Barry K."/>
            <person name="Detter J.C."/>
            <person name="Glavina T."/>
            <person name="Hammon N."/>
            <person name="Israni S."/>
            <person name="Pitluck S."/>
            <person name="Bryant D."/>
            <person name="Schmutz J."/>
            <person name="Larimer F."/>
            <person name="Land M."/>
            <person name="Kyrpides N."/>
            <person name="Ivanova N."/>
            <person name="Richardson P."/>
        </authorList>
    </citation>
    <scope>NUCLEOTIDE SEQUENCE [LARGE SCALE GENOMIC DNA]</scope>
    <source>
        <strain>DSM 273 / BCRC 81028 / 2530</strain>
    </source>
</reference>
<accession>Q3B172</accession>
<name>BIOC_CHLL3</name>
<feature type="chain" id="PRO_0000412516" description="Malonyl-[acyl-carrier protein] O-methyltransferase">
    <location>
        <begin position="1"/>
        <end position="263"/>
    </location>
</feature>